<dbReference type="EMBL" id="AL939121">
    <property type="protein sequence ID" value="CAB82069.1"/>
    <property type="molecule type" value="Genomic_DNA"/>
</dbReference>
<dbReference type="RefSeq" id="NP_628860.1">
    <property type="nucleotide sequence ID" value="NC_003888.3"/>
</dbReference>
<dbReference type="RefSeq" id="WP_003948644.1">
    <property type="nucleotide sequence ID" value="NZ_VNID01000016.1"/>
</dbReference>
<dbReference type="SMR" id="P66337"/>
<dbReference type="FunCoup" id="P66337">
    <property type="interactions" value="353"/>
</dbReference>
<dbReference type="STRING" id="100226.gene:17762350"/>
<dbReference type="PaxDb" id="100226-SCO4701"/>
<dbReference type="GeneID" id="97760369"/>
<dbReference type="KEGG" id="sco:SCO4701"/>
<dbReference type="PATRIC" id="fig|100226.15.peg.4772"/>
<dbReference type="eggNOG" id="COG0051">
    <property type="taxonomic scope" value="Bacteria"/>
</dbReference>
<dbReference type="HOGENOM" id="CLU_122625_1_3_11"/>
<dbReference type="InParanoid" id="P66337"/>
<dbReference type="OrthoDB" id="9804464at2"/>
<dbReference type="PhylomeDB" id="P66337"/>
<dbReference type="PRO" id="PR:P66337"/>
<dbReference type="Proteomes" id="UP000001973">
    <property type="component" value="Chromosome"/>
</dbReference>
<dbReference type="GO" id="GO:0015935">
    <property type="term" value="C:small ribosomal subunit"/>
    <property type="evidence" value="ECO:0000318"/>
    <property type="project" value="GO_Central"/>
</dbReference>
<dbReference type="GO" id="GO:0003735">
    <property type="term" value="F:structural constituent of ribosome"/>
    <property type="evidence" value="ECO:0000318"/>
    <property type="project" value="GO_Central"/>
</dbReference>
<dbReference type="GO" id="GO:0000049">
    <property type="term" value="F:tRNA binding"/>
    <property type="evidence" value="ECO:0007669"/>
    <property type="project" value="UniProtKB-UniRule"/>
</dbReference>
<dbReference type="GO" id="GO:0006412">
    <property type="term" value="P:translation"/>
    <property type="evidence" value="ECO:0007669"/>
    <property type="project" value="UniProtKB-UniRule"/>
</dbReference>
<dbReference type="FunFam" id="3.30.70.600:FF:000001">
    <property type="entry name" value="30S ribosomal protein S10"/>
    <property type="match status" value="1"/>
</dbReference>
<dbReference type="Gene3D" id="3.30.70.600">
    <property type="entry name" value="Ribosomal protein S10 domain"/>
    <property type="match status" value="1"/>
</dbReference>
<dbReference type="HAMAP" id="MF_00508">
    <property type="entry name" value="Ribosomal_uS10"/>
    <property type="match status" value="1"/>
</dbReference>
<dbReference type="InterPro" id="IPR001848">
    <property type="entry name" value="Ribosomal_uS10"/>
</dbReference>
<dbReference type="InterPro" id="IPR018268">
    <property type="entry name" value="Ribosomal_uS10_CS"/>
</dbReference>
<dbReference type="InterPro" id="IPR027486">
    <property type="entry name" value="Ribosomal_uS10_dom"/>
</dbReference>
<dbReference type="InterPro" id="IPR036838">
    <property type="entry name" value="Ribosomal_uS10_dom_sf"/>
</dbReference>
<dbReference type="NCBIfam" id="NF001861">
    <property type="entry name" value="PRK00596.1"/>
    <property type="match status" value="1"/>
</dbReference>
<dbReference type="NCBIfam" id="TIGR01049">
    <property type="entry name" value="rpsJ_bact"/>
    <property type="match status" value="1"/>
</dbReference>
<dbReference type="PANTHER" id="PTHR11700">
    <property type="entry name" value="30S RIBOSOMAL PROTEIN S10 FAMILY MEMBER"/>
    <property type="match status" value="1"/>
</dbReference>
<dbReference type="Pfam" id="PF00338">
    <property type="entry name" value="Ribosomal_S10"/>
    <property type="match status" value="1"/>
</dbReference>
<dbReference type="PRINTS" id="PR00971">
    <property type="entry name" value="RIBOSOMALS10"/>
</dbReference>
<dbReference type="SMART" id="SM01403">
    <property type="entry name" value="Ribosomal_S10"/>
    <property type="match status" value="1"/>
</dbReference>
<dbReference type="SUPFAM" id="SSF54999">
    <property type="entry name" value="Ribosomal protein S10"/>
    <property type="match status" value="1"/>
</dbReference>
<dbReference type="PROSITE" id="PS00361">
    <property type="entry name" value="RIBOSOMAL_S10"/>
    <property type="match status" value="1"/>
</dbReference>
<gene>
    <name evidence="1" type="primary">rpsJ</name>
    <name type="ordered locus">SCO4701</name>
    <name type="ORF">SCD31.26</name>
</gene>
<proteinExistence type="inferred from homology"/>
<evidence type="ECO:0000255" key="1">
    <source>
        <dbReference type="HAMAP-Rule" id="MF_00508"/>
    </source>
</evidence>
<evidence type="ECO:0000305" key="2"/>
<keyword id="KW-1185">Reference proteome</keyword>
<keyword id="KW-0687">Ribonucleoprotein</keyword>
<keyword id="KW-0689">Ribosomal protein</keyword>
<name>RS10_STRCO</name>
<comment type="function">
    <text evidence="1">Involved in the binding of tRNA to the ribosomes.</text>
</comment>
<comment type="subunit">
    <text evidence="1">Part of the 30S ribosomal subunit.</text>
</comment>
<comment type="similarity">
    <text evidence="1">Belongs to the universal ribosomal protein uS10 family.</text>
</comment>
<organism>
    <name type="scientific">Streptomyces coelicolor (strain ATCC BAA-471 / A3(2) / M145)</name>
    <dbReference type="NCBI Taxonomy" id="100226"/>
    <lineage>
        <taxon>Bacteria</taxon>
        <taxon>Bacillati</taxon>
        <taxon>Actinomycetota</taxon>
        <taxon>Actinomycetes</taxon>
        <taxon>Kitasatosporales</taxon>
        <taxon>Streptomycetaceae</taxon>
        <taxon>Streptomyces</taxon>
        <taxon>Streptomyces albidoflavus group</taxon>
    </lineage>
</organism>
<accession>P66337</accession>
<accession>Q9L0E1</accession>
<sequence length="102" mass="11521">MAGQKIRIRLKAYDHEVIDSSAKKIVETVTRTGASVAGPVPLPTEKNVYCVIKSPHKYKDSREHFEMRTHKRLIDILDPTPKTVDSLMRLDLPAGVDIEIKL</sequence>
<feature type="chain" id="PRO_0000146604" description="Small ribosomal subunit protein uS10">
    <location>
        <begin position="1"/>
        <end position="102"/>
    </location>
</feature>
<protein>
    <recommendedName>
        <fullName evidence="1">Small ribosomal subunit protein uS10</fullName>
    </recommendedName>
    <alternativeName>
        <fullName evidence="2">30S ribosomal protein S10</fullName>
    </alternativeName>
</protein>
<reference key="1">
    <citation type="journal article" date="2002" name="Nature">
        <title>Complete genome sequence of the model actinomycete Streptomyces coelicolor A3(2).</title>
        <authorList>
            <person name="Bentley S.D."/>
            <person name="Chater K.F."/>
            <person name="Cerdeno-Tarraga A.-M."/>
            <person name="Challis G.L."/>
            <person name="Thomson N.R."/>
            <person name="James K.D."/>
            <person name="Harris D.E."/>
            <person name="Quail M.A."/>
            <person name="Kieser H."/>
            <person name="Harper D."/>
            <person name="Bateman A."/>
            <person name="Brown S."/>
            <person name="Chandra G."/>
            <person name="Chen C.W."/>
            <person name="Collins M."/>
            <person name="Cronin A."/>
            <person name="Fraser A."/>
            <person name="Goble A."/>
            <person name="Hidalgo J."/>
            <person name="Hornsby T."/>
            <person name="Howarth S."/>
            <person name="Huang C.-H."/>
            <person name="Kieser T."/>
            <person name="Larke L."/>
            <person name="Murphy L.D."/>
            <person name="Oliver K."/>
            <person name="O'Neil S."/>
            <person name="Rabbinowitsch E."/>
            <person name="Rajandream M.A."/>
            <person name="Rutherford K.M."/>
            <person name="Rutter S."/>
            <person name="Seeger K."/>
            <person name="Saunders D."/>
            <person name="Sharp S."/>
            <person name="Squares R."/>
            <person name="Squares S."/>
            <person name="Taylor K."/>
            <person name="Warren T."/>
            <person name="Wietzorrek A."/>
            <person name="Woodward J.R."/>
            <person name="Barrell B.G."/>
            <person name="Parkhill J."/>
            <person name="Hopwood D.A."/>
        </authorList>
    </citation>
    <scope>NUCLEOTIDE SEQUENCE [LARGE SCALE GENOMIC DNA]</scope>
    <source>
        <strain>ATCC BAA-471 / A3(2) / M145</strain>
    </source>
</reference>